<protein>
    <recommendedName>
        <fullName>Myosin light chain kinase family member 4</fullName>
        <ecNumber>2.7.11.1</ecNumber>
    </recommendedName>
    <alternativeName>
        <fullName>Sugen kinase 85</fullName>
        <shortName>SgK085</shortName>
    </alternativeName>
</protein>
<evidence type="ECO:0000255" key="1">
    <source>
        <dbReference type="PROSITE-ProRule" id="PRU00159"/>
    </source>
</evidence>
<evidence type="ECO:0000255" key="2">
    <source>
        <dbReference type="PROSITE-ProRule" id="PRU10027"/>
    </source>
</evidence>
<evidence type="ECO:0000269" key="3">
    <source>
    </source>
</evidence>
<evidence type="ECO:0000269" key="4">
    <source>
    </source>
</evidence>
<evidence type="ECO:0000303" key="5">
    <source ref="3"/>
</evidence>
<evidence type="ECO:0000305" key="6"/>
<evidence type="ECO:0007829" key="7">
    <source>
        <dbReference type="PDB" id="2X4F"/>
    </source>
</evidence>
<accession>Q86YV6</accession>
<accession>A2RUC0</accession>
<accession>Q5TAW2</accession>
<keyword id="KW-0002">3D-structure</keyword>
<keyword id="KW-0025">Alternative splicing</keyword>
<keyword id="KW-0067">ATP-binding</keyword>
<keyword id="KW-0418">Kinase</keyword>
<keyword id="KW-0547">Nucleotide-binding</keyword>
<keyword id="KW-1267">Proteomics identification</keyword>
<keyword id="KW-1185">Reference proteome</keyword>
<keyword id="KW-0723">Serine/threonine-protein kinase</keyword>
<keyword id="KW-0808">Transferase</keyword>
<reference key="1">
    <citation type="journal article" date="2003" name="Nature">
        <title>The DNA sequence and analysis of human chromosome 6.</title>
        <authorList>
            <person name="Mungall A.J."/>
            <person name="Palmer S.A."/>
            <person name="Sims S.K."/>
            <person name="Edwards C.A."/>
            <person name="Ashurst J.L."/>
            <person name="Wilming L."/>
            <person name="Jones M.C."/>
            <person name="Horton R."/>
            <person name="Hunt S.E."/>
            <person name="Scott C.E."/>
            <person name="Gilbert J.G.R."/>
            <person name="Clamp M.E."/>
            <person name="Bethel G."/>
            <person name="Milne S."/>
            <person name="Ainscough R."/>
            <person name="Almeida J.P."/>
            <person name="Ambrose K.D."/>
            <person name="Andrews T.D."/>
            <person name="Ashwell R.I.S."/>
            <person name="Babbage A.K."/>
            <person name="Bagguley C.L."/>
            <person name="Bailey J."/>
            <person name="Banerjee R."/>
            <person name="Barker D.J."/>
            <person name="Barlow K.F."/>
            <person name="Bates K."/>
            <person name="Beare D.M."/>
            <person name="Beasley H."/>
            <person name="Beasley O."/>
            <person name="Bird C.P."/>
            <person name="Blakey S.E."/>
            <person name="Bray-Allen S."/>
            <person name="Brook J."/>
            <person name="Brown A.J."/>
            <person name="Brown J.Y."/>
            <person name="Burford D.C."/>
            <person name="Burrill W."/>
            <person name="Burton J."/>
            <person name="Carder C."/>
            <person name="Carter N.P."/>
            <person name="Chapman J.C."/>
            <person name="Clark S.Y."/>
            <person name="Clark G."/>
            <person name="Clee C.M."/>
            <person name="Clegg S."/>
            <person name="Cobley V."/>
            <person name="Collier R.E."/>
            <person name="Collins J.E."/>
            <person name="Colman L.K."/>
            <person name="Corby N.R."/>
            <person name="Coville G.J."/>
            <person name="Culley K.M."/>
            <person name="Dhami P."/>
            <person name="Davies J."/>
            <person name="Dunn M."/>
            <person name="Earthrowl M.E."/>
            <person name="Ellington A.E."/>
            <person name="Evans K.A."/>
            <person name="Faulkner L."/>
            <person name="Francis M.D."/>
            <person name="Frankish A."/>
            <person name="Frankland J."/>
            <person name="French L."/>
            <person name="Garner P."/>
            <person name="Garnett J."/>
            <person name="Ghori M.J."/>
            <person name="Gilby L.M."/>
            <person name="Gillson C.J."/>
            <person name="Glithero R.J."/>
            <person name="Grafham D.V."/>
            <person name="Grant M."/>
            <person name="Gribble S."/>
            <person name="Griffiths C."/>
            <person name="Griffiths M.N.D."/>
            <person name="Hall R."/>
            <person name="Halls K.S."/>
            <person name="Hammond S."/>
            <person name="Harley J.L."/>
            <person name="Hart E.A."/>
            <person name="Heath P.D."/>
            <person name="Heathcott R."/>
            <person name="Holmes S.J."/>
            <person name="Howden P.J."/>
            <person name="Howe K.L."/>
            <person name="Howell G.R."/>
            <person name="Huckle E."/>
            <person name="Humphray S.J."/>
            <person name="Humphries M.D."/>
            <person name="Hunt A.R."/>
            <person name="Johnson C.M."/>
            <person name="Joy A.A."/>
            <person name="Kay M."/>
            <person name="Keenan S.J."/>
            <person name="Kimberley A.M."/>
            <person name="King A."/>
            <person name="Laird G.K."/>
            <person name="Langford C."/>
            <person name="Lawlor S."/>
            <person name="Leongamornlert D.A."/>
            <person name="Leversha M."/>
            <person name="Lloyd C.R."/>
            <person name="Lloyd D.M."/>
            <person name="Loveland J.E."/>
            <person name="Lovell J."/>
            <person name="Martin S."/>
            <person name="Mashreghi-Mohammadi M."/>
            <person name="Maslen G.L."/>
            <person name="Matthews L."/>
            <person name="McCann O.T."/>
            <person name="McLaren S.J."/>
            <person name="McLay K."/>
            <person name="McMurray A."/>
            <person name="Moore M.J.F."/>
            <person name="Mullikin J.C."/>
            <person name="Niblett D."/>
            <person name="Nickerson T."/>
            <person name="Novik K.L."/>
            <person name="Oliver K."/>
            <person name="Overton-Larty E.K."/>
            <person name="Parker A."/>
            <person name="Patel R."/>
            <person name="Pearce A.V."/>
            <person name="Peck A.I."/>
            <person name="Phillimore B.J.C.T."/>
            <person name="Phillips S."/>
            <person name="Plumb R.W."/>
            <person name="Porter K.M."/>
            <person name="Ramsey Y."/>
            <person name="Ranby S.A."/>
            <person name="Rice C.M."/>
            <person name="Ross M.T."/>
            <person name="Searle S.M."/>
            <person name="Sehra H.K."/>
            <person name="Sheridan E."/>
            <person name="Skuce C.D."/>
            <person name="Smith S."/>
            <person name="Smith M."/>
            <person name="Spraggon L."/>
            <person name="Squares S.L."/>
            <person name="Steward C.A."/>
            <person name="Sycamore N."/>
            <person name="Tamlyn-Hall G."/>
            <person name="Tester J."/>
            <person name="Theaker A.J."/>
            <person name="Thomas D.W."/>
            <person name="Thorpe A."/>
            <person name="Tracey A."/>
            <person name="Tromans A."/>
            <person name="Tubby B."/>
            <person name="Wall M."/>
            <person name="Wallis J.M."/>
            <person name="West A.P."/>
            <person name="White S.S."/>
            <person name="Whitehead S.L."/>
            <person name="Whittaker H."/>
            <person name="Wild A."/>
            <person name="Willey D.J."/>
            <person name="Wilmer T.E."/>
            <person name="Wood J.M."/>
            <person name="Wray P.W."/>
            <person name="Wyatt J.C."/>
            <person name="Young L."/>
            <person name="Younger R.M."/>
            <person name="Bentley D.R."/>
            <person name="Coulson A."/>
            <person name="Durbin R.M."/>
            <person name="Hubbard T."/>
            <person name="Sulston J.E."/>
            <person name="Dunham I."/>
            <person name="Rogers J."/>
            <person name="Beck S."/>
        </authorList>
    </citation>
    <scope>NUCLEOTIDE SEQUENCE [LARGE SCALE GENOMIC DNA]</scope>
</reference>
<reference key="2">
    <citation type="journal article" date="2004" name="Genome Res.">
        <title>The status, quality, and expansion of the NIH full-length cDNA project: the Mammalian Gene Collection (MGC).</title>
        <authorList>
            <consortium name="The MGC Project Team"/>
        </authorList>
    </citation>
    <scope>NUCLEOTIDE SEQUENCE [LARGE SCALE MRNA] (ISOFORM 1)</scope>
    <scope>VARIANT ARG-50</scope>
</reference>
<reference key="3">
    <citation type="submission" date="2003-02" db="EMBL/GenBank/DDBJ databases">
        <title>The nucleotide sequence of a long cDNA clone isolated from human spleen.</title>
        <authorList>
            <person name="Jikuya H."/>
            <person name="Takano J."/>
            <person name="Nomura N."/>
            <person name="Kikuno R."/>
            <person name="Nagase T."/>
            <person name="Ohara O."/>
        </authorList>
    </citation>
    <scope>NUCLEOTIDE SEQUENCE [LARGE SCALE MRNA] OF 234-388 (ISOFORM 2)</scope>
    <source>
        <tissue>Spleen</tissue>
    </source>
</reference>
<reference key="4">
    <citation type="journal article" date="2002" name="Science">
        <title>The protein kinase complement of the human genome.</title>
        <authorList>
            <person name="Manning G."/>
            <person name="Whyte D.B."/>
            <person name="Martinez R."/>
            <person name="Hunter T."/>
            <person name="Sudarsanam S."/>
        </authorList>
    </citation>
    <scope>IDENTIFICATION</scope>
</reference>
<reference key="5">
    <citation type="journal article" date="2007" name="Nature">
        <title>Patterns of somatic mutation in human cancer genomes.</title>
        <authorList>
            <person name="Greenman C."/>
            <person name="Stephens P."/>
            <person name="Smith R."/>
            <person name="Dalgliesh G.L."/>
            <person name="Hunter C."/>
            <person name="Bignell G."/>
            <person name="Davies H."/>
            <person name="Teague J."/>
            <person name="Butler A."/>
            <person name="Stevens C."/>
            <person name="Edkins S."/>
            <person name="O'Meara S."/>
            <person name="Vastrik I."/>
            <person name="Schmidt E.E."/>
            <person name="Avis T."/>
            <person name="Barthorpe S."/>
            <person name="Bhamra G."/>
            <person name="Buck G."/>
            <person name="Choudhury B."/>
            <person name="Clements J."/>
            <person name="Cole J."/>
            <person name="Dicks E."/>
            <person name="Forbes S."/>
            <person name="Gray K."/>
            <person name="Halliday K."/>
            <person name="Harrison R."/>
            <person name="Hills K."/>
            <person name="Hinton J."/>
            <person name="Jenkinson A."/>
            <person name="Jones D."/>
            <person name="Menzies A."/>
            <person name="Mironenko T."/>
            <person name="Perry J."/>
            <person name="Raine K."/>
            <person name="Richardson D."/>
            <person name="Shepherd R."/>
            <person name="Small A."/>
            <person name="Tofts C."/>
            <person name="Varian J."/>
            <person name="Webb T."/>
            <person name="West S."/>
            <person name="Widaa S."/>
            <person name="Yates A."/>
            <person name="Cahill D.P."/>
            <person name="Louis D.N."/>
            <person name="Goldstraw P."/>
            <person name="Nicholson A.G."/>
            <person name="Brasseur F."/>
            <person name="Looijenga L."/>
            <person name="Weber B.L."/>
            <person name="Chiew Y.-E."/>
            <person name="DeFazio A."/>
            <person name="Greaves M.F."/>
            <person name="Green A.R."/>
            <person name="Campbell P."/>
            <person name="Birney E."/>
            <person name="Easton D.F."/>
            <person name="Chenevix-Trench G."/>
            <person name="Tan M.-H."/>
            <person name="Khoo S.K."/>
            <person name="Teh B.T."/>
            <person name="Yuen S.T."/>
            <person name="Leung S.Y."/>
            <person name="Wooster R."/>
            <person name="Futreal P.A."/>
            <person name="Stratton M.R."/>
        </authorList>
    </citation>
    <scope>VARIANTS [LARGE SCALE ANALYSIS] GLN-30; ARG-50; SER-78; MET-126; LEU-217; TYR-318 AND ARG-373</scope>
</reference>
<sequence length="388" mass="44508">MLKVKRLEEFNTCYNSNQLEKMAFFQCREEVEKVKCFLEKNSGDQDSRSGHNEAKEVWSNADLTERMPVKSKRTSALAVDIPAPPAPFDHRIVTAKQGAVNSFYTVSKTEILGGGRFGQVHKCEETATGLKLAAKIIKTRGMKDKEEVKNEISVMNQLDHANLIQLYDAFESKNDIVLVMEYVDGGELFDRIIDESYNLTELDTILFMKQICEGIRHMHQMYILHLDLKPENILCVNRDAKQIKIIDFGLARRYKPREKLKVNFGTPEFLAPEVVNYDFVSFPTDMWSVGVIAYMLLSGLSPFLGDNDAETLNNILACRWDLEDEEFQDISEEAKEFISKLLIKEKSWRISASEALKHPWLSDHKLHSRLNAQKKKNRGSDAQDFVTK</sequence>
<gene>
    <name type="primary">MYLK4</name>
    <name type="synonym">SGK085</name>
</gene>
<proteinExistence type="evidence at protein level"/>
<name>MYLK4_HUMAN</name>
<feature type="chain" id="PRO_0000261030" description="Myosin light chain kinase family member 4">
    <location>
        <begin position="1"/>
        <end position="388"/>
    </location>
</feature>
<feature type="domain" description="Protein kinase" evidence="1">
    <location>
        <begin position="106"/>
        <end position="361"/>
    </location>
</feature>
<feature type="active site" description="Proton acceptor" evidence="1 2">
    <location>
        <position position="227"/>
    </location>
</feature>
<feature type="binding site" evidence="1">
    <location>
        <begin position="112"/>
        <end position="120"/>
    </location>
    <ligand>
        <name>ATP</name>
        <dbReference type="ChEBI" id="CHEBI:30616"/>
    </ligand>
</feature>
<feature type="binding site" evidence="1">
    <location>
        <position position="135"/>
    </location>
    <ligand>
        <name>ATP</name>
        <dbReference type="ChEBI" id="CHEBI:30616"/>
    </ligand>
</feature>
<feature type="splice variant" id="VSP_026948" description="In isoform 2." evidence="5">
    <original>LCVNRDAKQIKIIDFGLAR</original>
    <variation>QCSRFLIDTSILPLCLLNC</variation>
    <location>
        <begin position="234"/>
        <end position="252"/>
    </location>
</feature>
<feature type="sequence variant" id="VAR_040864" description="In a breast infiltrating ductal carcinoma sample; somatic mutation." evidence="4">
    <original>E</original>
    <variation>Q</variation>
    <location>
        <position position="30"/>
    </location>
</feature>
<feature type="sequence variant" id="VAR_051650" description="In dbSNP:rs7770402.">
    <original>E</original>
    <variation>A</variation>
    <location>
        <position position="39"/>
    </location>
</feature>
<feature type="sequence variant" id="VAR_040865" description="In dbSNP:rs2296356." evidence="3 4">
    <original>G</original>
    <variation>R</variation>
    <location>
        <position position="50"/>
    </location>
</feature>
<feature type="sequence variant" id="VAR_040866" description="In a breast infiltrating ductal carcinoma sample; somatic mutation; dbSNP:rs762093504." evidence="4">
    <original>A</original>
    <variation>S</variation>
    <location>
        <position position="78"/>
    </location>
</feature>
<feature type="sequence variant" id="VAR_040867" description="In dbSNP:rs34953021." evidence="4">
    <original>T</original>
    <variation>M</variation>
    <location>
        <position position="126"/>
    </location>
</feature>
<feature type="sequence variant" id="VAR_040868" description="In a lung squamous cell carcinoma sample; somatic mutation." evidence="4">
    <original>H</original>
    <variation>L</variation>
    <location>
        <position position="217"/>
    </location>
</feature>
<feature type="sequence variant" id="VAR_040869" description="In dbSNP:rs35609073." evidence="4">
    <original>C</original>
    <variation>Y</variation>
    <location>
        <position position="318"/>
    </location>
</feature>
<feature type="sequence variant" id="VAR_040870" description="In dbSNP:rs35211631." evidence="4">
    <original>Q</original>
    <variation>R</variation>
    <location>
        <position position="373"/>
    </location>
</feature>
<feature type="strand" evidence="7">
    <location>
        <begin position="96"/>
        <end position="98"/>
    </location>
</feature>
<feature type="helix" evidence="7">
    <location>
        <begin position="100"/>
        <end position="102"/>
    </location>
</feature>
<feature type="strand" evidence="7">
    <location>
        <begin position="104"/>
        <end position="111"/>
    </location>
</feature>
<feature type="strand" evidence="7">
    <location>
        <begin position="120"/>
        <end position="125"/>
    </location>
</feature>
<feature type="turn" evidence="7">
    <location>
        <begin position="126"/>
        <end position="128"/>
    </location>
</feature>
<feature type="strand" evidence="7">
    <location>
        <begin position="131"/>
        <end position="138"/>
    </location>
</feature>
<feature type="helix" evidence="7">
    <location>
        <begin position="142"/>
        <end position="155"/>
    </location>
</feature>
<feature type="strand" evidence="7">
    <location>
        <begin position="166"/>
        <end position="171"/>
    </location>
</feature>
<feature type="strand" evidence="7">
    <location>
        <begin position="173"/>
        <end position="181"/>
    </location>
</feature>
<feature type="helix" evidence="7">
    <location>
        <begin position="189"/>
        <end position="194"/>
    </location>
</feature>
<feature type="helix" evidence="7">
    <location>
        <begin position="196"/>
        <end position="198"/>
    </location>
</feature>
<feature type="helix" evidence="7">
    <location>
        <begin position="201"/>
        <end position="220"/>
    </location>
</feature>
<feature type="helix" evidence="7">
    <location>
        <begin position="230"/>
        <end position="232"/>
    </location>
</feature>
<feature type="strand" evidence="7">
    <location>
        <begin position="233"/>
        <end position="237"/>
    </location>
</feature>
<feature type="turn" evidence="7">
    <location>
        <begin position="238"/>
        <end position="241"/>
    </location>
</feature>
<feature type="strand" evidence="7">
    <location>
        <begin position="242"/>
        <end position="245"/>
    </location>
</feature>
<feature type="helix" evidence="7">
    <location>
        <begin position="272"/>
        <end position="275"/>
    </location>
</feature>
<feature type="helix" evidence="7">
    <location>
        <begin position="282"/>
        <end position="298"/>
    </location>
</feature>
<feature type="helix" evidence="7">
    <location>
        <begin position="308"/>
        <end position="317"/>
    </location>
</feature>
<feature type="helix" evidence="7">
    <location>
        <begin position="325"/>
        <end position="327"/>
    </location>
</feature>
<feature type="helix" evidence="7">
    <location>
        <begin position="332"/>
        <end position="339"/>
    </location>
</feature>
<feature type="helix" evidence="7">
    <location>
        <begin position="346"/>
        <end position="348"/>
    </location>
</feature>
<feature type="helix" evidence="7">
    <location>
        <begin position="352"/>
        <end position="357"/>
    </location>
</feature>
<feature type="helix" evidence="7">
    <location>
        <begin position="359"/>
        <end position="362"/>
    </location>
</feature>
<feature type="helix" evidence="7">
    <location>
        <begin position="364"/>
        <end position="372"/>
    </location>
</feature>
<organism>
    <name type="scientific">Homo sapiens</name>
    <name type="common">Human</name>
    <dbReference type="NCBI Taxonomy" id="9606"/>
    <lineage>
        <taxon>Eukaryota</taxon>
        <taxon>Metazoa</taxon>
        <taxon>Chordata</taxon>
        <taxon>Craniata</taxon>
        <taxon>Vertebrata</taxon>
        <taxon>Euteleostomi</taxon>
        <taxon>Mammalia</taxon>
        <taxon>Eutheria</taxon>
        <taxon>Euarchontoglires</taxon>
        <taxon>Primates</taxon>
        <taxon>Haplorrhini</taxon>
        <taxon>Catarrhini</taxon>
        <taxon>Hominidae</taxon>
        <taxon>Homo</taxon>
    </lineage>
</organism>
<dbReference type="EC" id="2.7.11.1"/>
<dbReference type="EMBL" id="AL138876">
    <property type="status" value="NOT_ANNOTATED_CDS"/>
    <property type="molecule type" value="Genomic_DNA"/>
</dbReference>
<dbReference type="EMBL" id="AL139092">
    <property type="status" value="NOT_ANNOTATED_CDS"/>
    <property type="molecule type" value="Genomic_DNA"/>
</dbReference>
<dbReference type="EMBL" id="BC132831">
    <property type="protein sequence ID" value="AAI32832.1"/>
    <property type="molecule type" value="mRNA"/>
</dbReference>
<dbReference type="EMBL" id="BC132833">
    <property type="protein sequence ID" value="AAI32834.1"/>
    <property type="molecule type" value="mRNA"/>
</dbReference>
<dbReference type="EMBL" id="AK122581">
    <property type="protein sequence ID" value="BAC56922.1"/>
    <property type="molecule type" value="mRNA"/>
</dbReference>
<dbReference type="CCDS" id="CCDS34330.1">
    <molecule id="Q86YV6-1"/>
</dbReference>
<dbReference type="RefSeq" id="NP_001012418.2">
    <molecule id="Q86YV6-1"/>
    <property type="nucleotide sequence ID" value="NM_001012418.5"/>
</dbReference>
<dbReference type="RefSeq" id="NP_001334801.1">
    <property type="nucleotide sequence ID" value="NM_001347872.1"/>
</dbReference>
<dbReference type="RefSeq" id="XP_005249136.1">
    <property type="nucleotide sequence ID" value="XM_005249079.2"/>
</dbReference>
<dbReference type="RefSeq" id="XP_016866308.1">
    <property type="nucleotide sequence ID" value="XM_017010819.1"/>
</dbReference>
<dbReference type="PDB" id="2X4F">
    <property type="method" value="X-ray"/>
    <property type="resolution" value="2.67 A"/>
    <property type="chains" value="A/B=40-388"/>
</dbReference>
<dbReference type="PDBsum" id="2X4F"/>
<dbReference type="SMR" id="Q86YV6"/>
<dbReference type="BioGRID" id="131005">
    <property type="interactions" value="92"/>
</dbReference>
<dbReference type="FunCoup" id="Q86YV6">
    <property type="interactions" value="839"/>
</dbReference>
<dbReference type="IntAct" id="Q86YV6">
    <property type="interactions" value="89"/>
</dbReference>
<dbReference type="STRING" id="9606.ENSP00000274643"/>
<dbReference type="BindingDB" id="Q86YV6"/>
<dbReference type="ChEMBL" id="CHEMBL5426"/>
<dbReference type="DrugBank" id="DB12010">
    <property type="generic name" value="Fostamatinib"/>
</dbReference>
<dbReference type="DrugCentral" id="Q86YV6"/>
<dbReference type="GuidetoPHARMACOLOGY" id="2111"/>
<dbReference type="PhosphoSitePlus" id="Q86YV6"/>
<dbReference type="BioMuta" id="MYLK4"/>
<dbReference type="DMDM" id="118573873"/>
<dbReference type="jPOST" id="Q86YV6"/>
<dbReference type="MassIVE" id="Q86YV6"/>
<dbReference type="PaxDb" id="9606-ENSP00000274643"/>
<dbReference type="PeptideAtlas" id="Q86YV6"/>
<dbReference type="ProteomicsDB" id="70476">
    <molecule id="Q86YV6-1"/>
</dbReference>
<dbReference type="Antibodypedia" id="9246">
    <property type="antibodies" value="129 antibodies from 24 providers"/>
</dbReference>
<dbReference type="DNASU" id="340156"/>
<dbReference type="Ensembl" id="ENST00000274643.9">
    <molecule id="Q86YV6-1"/>
    <property type="protein sequence ID" value="ENSP00000274643.7"/>
    <property type="gene ID" value="ENSG00000145949.12"/>
</dbReference>
<dbReference type="GeneID" id="340156"/>
<dbReference type="KEGG" id="hsa:340156"/>
<dbReference type="MANE-Select" id="ENST00000274643.9">
    <property type="protein sequence ID" value="ENSP00000274643.7"/>
    <property type="RefSeq nucleotide sequence ID" value="NM_001012418.5"/>
    <property type="RefSeq protein sequence ID" value="NP_001012418.2"/>
</dbReference>
<dbReference type="UCSC" id="uc003mty.5">
    <molecule id="Q86YV6-1"/>
    <property type="organism name" value="human"/>
</dbReference>
<dbReference type="AGR" id="HGNC:27972"/>
<dbReference type="CTD" id="340156"/>
<dbReference type="DisGeNET" id="340156"/>
<dbReference type="GeneCards" id="MYLK4"/>
<dbReference type="HGNC" id="HGNC:27972">
    <property type="gene designation" value="MYLK4"/>
</dbReference>
<dbReference type="HPA" id="ENSG00000145949">
    <property type="expression patterns" value="Group enriched (skeletal muscle, tongue)"/>
</dbReference>
<dbReference type="MalaCards" id="MYLK4"/>
<dbReference type="neXtProt" id="NX_Q86YV6"/>
<dbReference type="OpenTargets" id="ENSG00000145949"/>
<dbReference type="PharmGKB" id="PA162396406"/>
<dbReference type="VEuPathDB" id="HostDB:ENSG00000145949"/>
<dbReference type="eggNOG" id="KOG0032">
    <property type="taxonomic scope" value="Eukaryota"/>
</dbReference>
<dbReference type="GeneTree" id="ENSGT00940000156211"/>
<dbReference type="HOGENOM" id="CLU_000288_63_0_1"/>
<dbReference type="InParanoid" id="Q86YV6"/>
<dbReference type="OrthoDB" id="10260894at2759"/>
<dbReference type="PAN-GO" id="Q86YV6">
    <property type="GO annotations" value="1 GO annotation based on evolutionary models"/>
</dbReference>
<dbReference type="PhylomeDB" id="Q86YV6"/>
<dbReference type="TreeFam" id="TF314166"/>
<dbReference type="PathwayCommons" id="Q86YV6"/>
<dbReference type="SignaLink" id="Q86YV6"/>
<dbReference type="BioGRID-ORCS" id="340156">
    <property type="hits" value="15 hits in 1183 CRISPR screens"/>
</dbReference>
<dbReference type="ChiTaRS" id="MYLK4">
    <property type="organism name" value="human"/>
</dbReference>
<dbReference type="EvolutionaryTrace" id="Q86YV6"/>
<dbReference type="GenomeRNAi" id="340156"/>
<dbReference type="Pharos" id="Q86YV6">
    <property type="development level" value="Tchem"/>
</dbReference>
<dbReference type="PRO" id="PR:Q86YV6"/>
<dbReference type="Proteomes" id="UP000005640">
    <property type="component" value="Chromosome 6"/>
</dbReference>
<dbReference type="RNAct" id="Q86YV6">
    <property type="molecule type" value="protein"/>
</dbReference>
<dbReference type="Bgee" id="ENSG00000145949">
    <property type="expression patterns" value="Expressed in biceps brachii and 114 other cell types or tissues"/>
</dbReference>
<dbReference type="ExpressionAtlas" id="Q86YV6">
    <property type="expression patterns" value="baseline and differential"/>
</dbReference>
<dbReference type="GO" id="GO:0005737">
    <property type="term" value="C:cytoplasm"/>
    <property type="evidence" value="ECO:0000318"/>
    <property type="project" value="GO_Central"/>
</dbReference>
<dbReference type="GO" id="GO:0005524">
    <property type="term" value="F:ATP binding"/>
    <property type="evidence" value="ECO:0007669"/>
    <property type="project" value="UniProtKB-KW"/>
</dbReference>
<dbReference type="GO" id="GO:0004687">
    <property type="term" value="F:myosin light chain kinase activity"/>
    <property type="evidence" value="ECO:0000318"/>
    <property type="project" value="GO_Central"/>
</dbReference>
<dbReference type="GO" id="GO:0106310">
    <property type="term" value="F:protein serine kinase activity"/>
    <property type="evidence" value="ECO:0007669"/>
    <property type="project" value="RHEA"/>
</dbReference>
<dbReference type="GO" id="GO:0007165">
    <property type="term" value="P:signal transduction"/>
    <property type="evidence" value="ECO:0000318"/>
    <property type="project" value="GO_Central"/>
</dbReference>
<dbReference type="CDD" id="cd14193">
    <property type="entry name" value="STKc_MLCK4"/>
    <property type="match status" value="1"/>
</dbReference>
<dbReference type="FunFam" id="3.30.200.20:FF:000196">
    <property type="entry name" value="Myosin light chain kinase family, member 4"/>
    <property type="match status" value="1"/>
</dbReference>
<dbReference type="FunFam" id="1.10.510.10:FF:000135">
    <property type="entry name" value="Putative myosin light chain kinase 3"/>
    <property type="match status" value="1"/>
</dbReference>
<dbReference type="Gene3D" id="3.30.200.20">
    <property type="entry name" value="Phosphorylase Kinase, domain 1"/>
    <property type="match status" value="1"/>
</dbReference>
<dbReference type="Gene3D" id="1.10.510.10">
    <property type="entry name" value="Transferase(Phosphotransferase) domain 1"/>
    <property type="match status" value="1"/>
</dbReference>
<dbReference type="InterPro" id="IPR011009">
    <property type="entry name" value="Kinase-like_dom_sf"/>
</dbReference>
<dbReference type="InterPro" id="IPR000719">
    <property type="entry name" value="Prot_kinase_dom"/>
</dbReference>
<dbReference type="InterPro" id="IPR017441">
    <property type="entry name" value="Protein_kinase_ATP_BS"/>
</dbReference>
<dbReference type="InterPro" id="IPR008271">
    <property type="entry name" value="Ser/Thr_kinase_AS"/>
</dbReference>
<dbReference type="PANTHER" id="PTHR24347">
    <property type="entry name" value="SERINE/THREONINE-PROTEIN KINASE"/>
    <property type="match status" value="1"/>
</dbReference>
<dbReference type="Pfam" id="PF00069">
    <property type="entry name" value="Pkinase"/>
    <property type="match status" value="1"/>
</dbReference>
<dbReference type="SMART" id="SM00220">
    <property type="entry name" value="S_TKc"/>
    <property type="match status" value="1"/>
</dbReference>
<dbReference type="SUPFAM" id="SSF56112">
    <property type="entry name" value="Protein kinase-like (PK-like)"/>
    <property type="match status" value="1"/>
</dbReference>
<dbReference type="PROSITE" id="PS00107">
    <property type="entry name" value="PROTEIN_KINASE_ATP"/>
    <property type="match status" value="1"/>
</dbReference>
<dbReference type="PROSITE" id="PS50011">
    <property type="entry name" value="PROTEIN_KINASE_DOM"/>
    <property type="match status" value="1"/>
</dbReference>
<dbReference type="PROSITE" id="PS00108">
    <property type="entry name" value="PROTEIN_KINASE_ST"/>
    <property type="match status" value="1"/>
</dbReference>
<comment type="catalytic activity">
    <reaction>
        <text>L-seryl-[protein] + ATP = O-phospho-L-seryl-[protein] + ADP + H(+)</text>
        <dbReference type="Rhea" id="RHEA:17989"/>
        <dbReference type="Rhea" id="RHEA-COMP:9863"/>
        <dbReference type="Rhea" id="RHEA-COMP:11604"/>
        <dbReference type="ChEBI" id="CHEBI:15378"/>
        <dbReference type="ChEBI" id="CHEBI:29999"/>
        <dbReference type="ChEBI" id="CHEBI:30616"/>
        <dbReference type="ChEBI" id="CHEBI:83421"/>
        <dbReference type="ChEBI" id="CHEBI:456216"/>
        <dbReference type="EC" id="2.7.11.1"/>
    </reaction>
</comment>
<comment type="catalytic activity">
    <reaction>
        <text>L-threonyl-[protein] + ATP = O-phospho-L-threonyl-[protein] + ADP + H(+)</text>
        <dbReference type="Rhea" id="RHEA:46608"/>
        <dbReference type="Rhea" id="RHEA-COMP:11060"/>
        <dbReference type="Rhea" id="RHEA-COMP:11605"/>
        <dbReference type="ChEBI" id="CHEBI:15378"/>
        <dbReference type="ChEBI" id="CHEBI:30013"/>
        <dbReference type="ChEBI" id="CHEBI:30616"/>
        <dbReference type="ChEBI" id="CHEBI:61977"/>
        <dbReference type="ChEBI" id="CHEBI:456216"/>
        <dbReference type="EC" id="2.7.11.1"/>
    </reaction>
</comment>
<comment type="interaction">
    <interactant intactId="EBI-6424604">
        <id>Q86YV6</id>
    </interactant>
    <interactant intactId="EBI-352572">
        <id>P08238</id>
        <label>HSP90AB1</label>
    </interactant>
    <organismsDiffer>false</organismsDiffer>
    <experiments>4</experiments>
</comment>
<comment type="alternative products">
    <event type="alternative splicing"/>
    <isoform>
        <id>Q86YV6-1</id>
        <name>1</name>
        <sequence type="displayed"/>
    </isoform>
    <isoform>
        <id>Q86YV6-2</id>
        <name>2</name>
        <sequence type="described" ref="VSP_026948"/>
    </isoform>
</comment>
<comment type="miscellaneous">
    <molecule>Isoform 2</molecule>
    <text evidence="6">Sequence incomplete.</text>
</comment>
<comment type="similarity">
    <text evidence="6">Belongs to the protein kinase superfamily. CAMK Ser/Thr protein kinase family.</text>
</comment>